<gene>
    <name type="primary">rsmB</name>
    <name type="synonym">fmu/fmv</name>
    <name type="synonym">rrmB</name>
    <name type="synonym">sun</name>
    <name type="synonym">yhdB</name>
    <name type="ordered locus">b3289</name>
    <name type="ordered locus">JW3250</name>
</gene>
<feature type="chain" id="PRO_0000211792" description="Ribosomal RNA small subunit methyltransferase B">
    <location>
        <begin position="1"/>
        <end position="429"/>
    </location>
</feature>
<feature type="active site" description="Nucleophile" evidence="1">
    <location>
        <position position="375"/>
    </location>
</feature>
<feature type="binding site">
    <location>
        <begin position="254"/>
        <end position="260"/>
    </location>
    <ligand>
        <name>S-adenosyl-L-methionine</name>
        <dbReference type="ChEBI" id="CHEBI:59789"/>
    </ligand>
</feature>
<feature type="binding site" evidence="4">
    <location>
        <position position="277"/>
    </location>
    <ligand>
        <name>S-adenosyl-L-methionine</name>
        <dbReference type="ChEBI" id="CHEBI:59789"/>
    </ligand>
</feature>
<feature type="binding site" evidence="4">
    <location>
        <position position="303"/>
    </location>
    <ligand>
        <name>S-adenosyl-L-methionine</name>
        <dbReference type="ChEBI" id="CHEBI:59789"/>
    </ligand>
</feature>
<feature type="binding site" evidence="4">
    <location>
        <position position="322"/>
    </location>
    <ligand>
        <name>S-adenosyl-L-methionine</name>
        <dbReference type="ChEBI" id="CHEBI:59789"/>
    </ligand>
</feature>
<feature type="mutagenesis site" description="Reduces activity 3-fold." evidence="3 4">
    <original>C</original>
    <variation>A</variation>
    <location>
        <position position="325"/>
    </location>
</feature>
<feature type="mutagenesis site" description="Loss of activity." evidence="3 4">
    <original>C</original>
    <variation>A</variation>
    <location>
        <position position="375"/>
    </location>
</feature>
<feature type="sequence conflict" description="In Ref. 6; AA sequence." evidence="5" ref="6">
    <original>K</original>
    <variation>C</variation>
    <location>
        <position position="3"/>
    </location>
</feature>
<feature type="sequence conflict" description="In Ref. 6; AA sequence." evidence="5" ref="6">
    <original>K</original>
    <variation>W</variation>
    <location>
        <position position="3"/>
    </location>
</feature>
<feature type="sequence conflict" description="In Ref. 1; CAA54369." evidence="5" ref="1">
    <original>GA</original>
    <variation>RR</variation>
    <location>
        <begin position="105"/>
        <end position="106"/>
    </location>
</feature>
<feature type="helix" evidence="6">
    <location>
        <begin position="7"/>
        <end position="21"/>
    </location>
</feature>
<feature type="helix" evidence="6">
    <location>
        <begin position="25"/>
        <end position="33"/>
    </location>
</feature>
<feature type="helix" evidence="6">
    <location>
        <begin position="38"/>
        <end position="65"/>
    </location>
</feature>
<feature type="helix" evidence="6">
    <location>
        <begin position="72"/>
        <end position="74"/>
    </location>
</feature>
<feature type="helix" evidence="6">
    <location>
        <begin position="75"/>
        <end position="90"/>
    </location>
</feature>
<feature type="helix" evidence="6">
    <location>
        <begin position="95"/>
        <end position="108"/>
    </location>
</feature>
<feature type="helix" evidence="6">
    <location>
        <begin position="112"/>
        <end position="114"/>
    </location>
</feature>
<feature type="helix" evidence="6">
    <location>
        <begin position="115"/>
        <end position="136"/>
    </location>
</feature>
<feature type="helix" evidence="6">
    <location>
        <begin position="140"/>
        <end position="143"/>
    </location>
</feature>
<feature type="helix" evidence="6">
    <location>
        <begin position="147"/>
        <end position="156"/>
    </location>
</feature>
<feature type="turn" evidence="6">
    <location>
        <begin position="158"/>
        <end position="160"/>
    </location>
</feature>
<feature type="helix" evidence="6">
    <location>
        <begin position="161"/>
        <end position="168"/>
    </location>
</feature>
<feature type="strand" evidence="6">
    <location>
        <begin position="174"/>
        <end position="178"/>
    </location>
</feature>
<feature type="turn" evidence="6">
    <location>
        <begin position="180"/>
        <end position="182"/>
    </location>
</feature>
<feature type="helix" evidence="6">
    <location>
        <begin position="185"/>
        <end position="194"/>
    </location>
</feature>
<feature type="strand" evidence="6">
    <location>
        <begin position="208"/>
        <end position="213"/>
    </location>
</feature>
<feature type="helix" evidence="6">
    <location>
        <begin position="217"/>
        <end position="219"/>
    </location>
</feature>
<feature type="helix" evidence="6">
    <location>
        <begin position="223"/>
        <end position="225"/>
    </location>
</feature>
<feature type="strand" evidence="6">
    <location>
        <begin position="227"/>
        <end position="230"/>
    </location>
</feature>
<feature type="helix" evidence="6">
    <location>
        <begin position="233"/>
        <end position="236"/>
    </location>
</feature>
<feature type="helix" evidence="6">
    <location>
        <begin position="238"/>
        <end position="242"/>
    </location>
</feature>
<feature type="strand" evidence="6">
    <location>
        <begin position="249"/>
        <end position="254"/>
    </location>
</feature>
<feature type="helix" evidence="6">
    <location>
        <begin position="259"/>
        <end position="267"/>
    </location>
</feature>
<feature type="strand" evidence="6">
    <location>
        <begin position="272"/>
        <end position="279"/>
    </location>
</feature>
<feature type="turn" evidence="6">
    <location>
        <begin position="280"/>
        <end position="282"/>
    </location>
</feature>
<feature type="helix" evidence="6">
    <location>
        <begin position="283"/>
        <end position="292"/>
    </location>
</feature>
<feature type="strand" evidence="6">
    <location>
        <begin position="298"/>
        <end position="301"/>
    </location>
</feature>
<feature type="helix" evidence="6">
    <location>
        <begin position="308"/>
        <end position="311"/>
    </location>
</feature>
<feature type="strand" evidence="6">
    <location>
        <begin position="316"/>
        <end position="322"/>
    </location>
</feature>
<feature type="helix" evidence="6">
    <location>
        <begin position="328"/>
        <end position="330"/>
    </location>
</feature>
<feature type="turn" evidence="6">
    <location>
        <begin position="331"/>
        <end position="333"/>
    </location>
</feature>
<feature type="helix" evidence="6">
    <location>
        <begin position="337"/>
        <end position="340"/>
    </location>
</feature>
<feature type="helix" evidence="6">
    <location>
        <begin position="345"/>
        <end position="360"/>
    </location>
</feature>
<feature type="helix" evidence="6">
    <location>
        <begin position="361"/>
        <end position="363"/>
    </location>
</feature>
<feature type="strand" evidence="6">
    <location>
        <begin position="364"/>
        <end position="375"/>
    </location>
</feature>
<feature type="turn" evidence="6">
    <location>
        <begin position="379"/>
        <end position="382"/>
    </location>
</feature>
<feature type="helix" evidence="6">
    <location>
        <begin position="383"/>
        <end position="392"/>
    </location>
</feature>
<feature type="strand" evidence="6">
    <location>
        <begin position="400"/>
        <end position="402"/>
    </location>
</feature>
<feature type="strand" evidence="6">
    <location>
        <begin position="404"/>
        <end position="411"/>
    </location>
</feature>
<feature type="strand" evidence="6">
    <location>
        <begin position="420"/>
        <end position="427"/>
    </location>
</feature>
<organism>
    <name type="scientific">Escherichia coli (strain K12)</name>
    <dbReference type="NCBI Taxonomy" id="83333"/>
    <lineage>
        <taxon>Bacteria</taxon>
        <taxon>Pseudomonadati</taxon>
        <taxon>Pseudomonadota</taxon>
        <taxon>Gammaproteobacteria</taxon>
        <taxon>Enterobacterales</taxon>
        <taxon>Enterobacteriaceae</taxon>
        <taxon>Escherichia</taxon>
    </lineage>
</organism>
<comment type="function">
    <text evidence="2">Specifically methylates the cytosine at position 967 (m5C967) of 16S rRNA.</text>
</comment>
<comment type="catalytic activity">
    <reaction>
        <text>cytidine(967) in 16S rRNA + S-adenosyl-L-methionine = 5-methylcytidine(967) in 16S rRNA + S-adenosyl-L-homocysteine + H(+)</text>
        <dbReference type="Rhea" id="RHEA:42748"/>
        <dbReference type="Rhea" id="RHEA-COMP:10219"/>
        <dbReference type="Rhea" id="RHEA-COMP:10220"/>
        <dbReference type="ChEBI" id="CHEBI:15378"/>
        <dbReference type="ChEBI" id="CHEBI:57856"/>
        <dbReference type="ChEBI" id="CHEBI:59789"/>
        <dbReference type="ChEBI" id="CHEBI:74483"/>
        <dbReference type="ChEBI" id="CHEBI:82748"/>
        <dbReference type="EC" id="2.1.1.176"/>
    </reaction>
</comment>
<comment type="subcellular location">
    <subcellularLocation>
        <location evidence="5">Cytoplasm</location>
    </subcellularLocation>
</comment>
<comment type="similarity">
    <text evidence="5">Belongs to the class I-like SAM-binding methyltransferase superfamily. RsmB/NOP family.</text>
</comment>
<comment type="sequence caution" evidence="5">
    <conflict type="frameshift">
        <sequence resource="EMBL-CDS" id="AAA58086"/>
    </conflict>
</comment>
<comment type="sequence caution" evidence="5">
    <conflict type="frameshift">
        <sequence resource="EMBL-CDS" id="CAA54369"/>
    </conflict>
    <text>Was originally named Fmu and represented the N-terminal part of the RsmB protein.</text>
</comment>
<comment type="sequence caution" evidence="5">
    <conflict type="frameshift">
        <sequence resource="EMBL-CDS" id="CAA54370"/>
    </conflict>
    <text>Was originally named Fmv and represented the C-terminal part of the RsmB protein.</text>
</comment>
<protein>
    <recommendedName>
        <fullName>Ribosomal RNA small subunit methyltransferase B</fullName>
        <ecNumber>2.1.1.176</ecNumber>
    </recommendedName>
    <alternativeName>
        <fullName>16S rRNA m5C967 methyltransferase</fullName>
    </alternativeName>
    <alternativeName>
        <fullName>rRNA (cytosine-C(5)-)-methyltransferase RsmB</fullName>
    </alternativeName>
</protein>
<evidence type="ECO:0000250" key="1"/>
<evidence type="ECO:0000269" key="2">
    <source>
    </source>
</evidence>
<evidence type="ECO:0000269" key="3">
    <source>
    </source>
</evidence>
<evidence type="ECO:0000269" key="4">
    <source>
    </source>
</evidence>
<evidence type="ECO:0000305" key="5"/>
<evidence type="ECO:0007829" key="6">
    <source>
        <dbReference type="PDB" id="1SQG"/>
    </source>
</evidence>
<dbReference type="EC" id="2.1.1.176"/>
<dbReference type="EMBL" id="X77091">
    <property type="protein sequence ID" value="CAA54369.1"/>
    <property type="status" value="ALT_FRAME"/>
    <property type="molecule type" value="Genomic_DNA"/>
</dbReference>
<dbReference type="EMBL" id="X77091">
    <property type="protein sequence ID" value="CAA54370.1"/>
    <property type="status" value="ALT_FRAME"/>
    <property type="molecule type" value="Genomic_DNA"/>
</dbReference>
<dbReference type="EMBL" id="Y10307">
    <property type="protein sequence ID" value="CAA71359.1"/>
    <property type="molecule type" value="Genomic_DNA"/>
</dbReference>
<dbReference type="EMBL" id="U18997">
    <property type="protein sequence ID" value="AAA58086.1"/>
    <property type="status" value="ALT_FRAME"/>
    <property type="molecule type" value="Genomic_DNA"/>
</dbReference>
<dbReference type="EMBL" id="U00096">
    <property type="protein sequence ID" value="AAC76314.1"/>
    <property type="molecule type" value="Genomic_DNA"/>
</dbReference>
<dbReference type="EMBL" id="AP009048">
    <property type="protein sequence ID" value="BAE78003.1"/>
    <property type="molecule type" value="Genomic_DNA"/>
</dbReference>
<dbReference type="EMBL" id="X52114">
    <property type="protein sequence ID" value="CAA36358.1"/>
    <property type="molecule type" value="Genomic_DNA"/>
</dbReference>
<dbReference type="PIR" id="D65121">
    <property type="entry name" value="D65121"/>
</dbReference>
<dbReference type="RefSeq" id="NP_417747.1">
    <property type="nucleotide sequence ID" value="NC_000913.3"/>
</dbReference>
<dbReference type="RefSeq" id="WP_000744778.1">
    <property type="nucleotide sequence ID" value="NZ_SSZK01000040.1"/>
</dbReference>
<dbReference type="PDB" id="1SQF">
    <property type="method" value="X-ray"/>
    <property type="resolution" value="2.10 A"/>
    <property type="chains" value="A=1-429"/>
</dbReference>
<dbReference type="PDB" id="1SQG">
    <property type="method" value="X-ray"/>
    <property type="resolution" value="1.65 A"/>
    <property type="chains" value="A=1-429"/>
</dbReference>
<dbReference type="PDBsum" id="1SQF"/>
<dbReference type="PDBsum" id="1SQG"/>
<dbReference type="SMR" id="P36929"/>
<dbReference type="BioGRID" id="4263436">
    <property type="interactions" value="63"/>
</dbReference>
<dbReference type="DIP" id="DIP-10946N"/>
<dbReference type="FunCoup" id="P36929">
    <property type="interactions" value="657"/>
</dbReference>
<dbReference type="IntAct" id="P36929">
    <property type="interactions" value="14"/>
</dbReference>
<dbReference type="STRING" id="511145.b3289"/>
<dbReference type="jPOST" id="P36929"/>
<dbReference type="PaxDb" id="511145-b3289"/>
<dbReference type="EnsemblBacteria" id="AAC76314">
    <property type="protein sequence ID" value="AAC76314"/>
    <property type="gene ID" value="b3289"/>
</dbReference>
<dbReference type="GeneID" id="947789"/>
<dbReference type="KEGG" id="ecj:JW3250"/>
<dbReference type="KEGG" id="eco:b3289"/>
<dbReference type="KEGG" id="ecoc:C3026_17880"/>
<dbReference type="PATRIC" id="fig|1411691.4.peg.3443"/>
<dbReference type="EchoBASE" id="EB2082"/>
<dbReference type="eggNOG" id="COG0144">
    <property type="taxonomic scope" value="Bacteria"/>
</dbReference>
<dbReference type="eggNOG" id="COG0781">
    <property type="taxonomic scope" value="Bacteria"/>
</dbReference>
<dbReference type="HOGENOM" id="CLU_005316_0_4_6"/>
<dbReference type="InParanoid" id="P36929"/>
<dbReference type="OMA" id="RVNRQHH"/>
<dbReference type="OrthoDB" id="9810297at2"/>
<dbReference type="PhylomeDB" id="P36929"/>
<dbReference type="BioCyc" id="EcoCyc:EG12163-MONOMER"/>
<dbReference type="BioCyc" id="MetaCyc:EG12163-MONOMER"/>
<dbReference type="BRENDA" id="2.1.1.176">
    <property type="organism ID" value="2026"/>
</dbReference>
<dbReference type="EvolutionaryTrace" id="P36929"/>
<dbReference type="PRO" id="PR:P36929"/>
<dbReference type="Proteomes" id="UP000000625">
    <property type="component" value="Chromosome"/>
</dbReference>
<dbReference type="GO" id="GO:0005829">
    <property type="term" value="C:cytosol"/>
    <property type="evidence" value="ECO:0000314"/>
    <property type="project" value="EcoCyc"/>
</dbReference>
<dbReference type="GO" id="GO:0003723">
    <property type="term" value="F:RNA binding"/>
    <property type="evidence" value="ECO:0007669"/>
    <property type="project" value="UniProtKB-KW"/>
</dbReference>
<dbReference type="GO" id="GO:0009383">
    <property type="term" value="F:rRNA (cytosine-C5-)-methyltransferase activity"/>
    <property type="evidence" value="ECO:0000314"/>
    <property type="project" value="EcoCyc"/>
</dbReference>
<dbReference type="GO" id="GO:0006355">
    <property type="term" value="P:regulation of DNA-templated transcription"/>
    <property type="evidence" value="ECO:0007669"/>
    <property type="project" value="InterPro"/>
</dbReference>
<dbReference type="GO" id="GO:0070475">
    <property type="term" value="P:rRNA base methylation"/>
    <property type="evidence" value="ECO:0000315"/>
    <property type="project" value="EcoCyc"/>
</dbReference>
<dbReference type="CDD" id="cd02440">
    <property type="entry name" value="AdoMet_MTases"/>
    <property type="match status" value="1"/>
</dbReference>
<dbReference type="CDD" id="cd00620">
    <property type="entry name" value="Methyltransferase_Sun"/>
    <property type="match status" value="1"/>
</dbReference>
<dbReference type="FunFam" id="1.10.287.730:FF:000001">
    <property type="entry name" value="Ribosomal RNA small subunit methyltransferase B"/>
    <property type="match status" value="1"/>
</dbReference>
<dbReference type="FunFam" id="1.10.940.10:FF:000002">
    <property type="entry name" value="Ribosomal RNA small subunit methyltransferase B"/>
    <property type="match status" value="1"/>
</dbReference>
<dbReference type="FunFam" id="3.30.70.1170:FF:000002">
    <property type="entry name" value="Ribosomal RNA small subunit methyltransferase B"/>
    <property type="match status" value="1"/>
</dbReference>
<dbReference type="FunFam" id="3.40.50.150:FF:000022">
    <property type="entry name" value="Ribosomal RNA small subunit methyltransferase B"/>
    <property type="match status" value="1"/>
</dbReference>
<dbReference type="Gene3D" id="1.10.287.730">
    <property type="entry name" value="Helix hairpin bin"/>
    <property type="match status" value="1"/>
</dbReference>
<dbReference type="Gene3D" id="1.10.940.10">
    <property type="entry name" value="NusB-like"/>
    <property type="match status" value="1"/>
</dbReference>
<dbReference type="Gene3D" id="3.30.70.1170">
    <property type="entry name" value="Sun protein, domain 3"/>
    <property type="match status" value="1"/>
</dbReference>
<dbReference type="Gene3D" id="3.40.50.150">
    <property type="entry name" value="Vaccinia Virus protein VP39"/>
    <property type="match status" value="1"/>
</dbReference>
<dbReference type="HAMAP" id="MF_01856">
    <property type="entry name" value="16SrRNA_methyltr_B"/>
    <property type="match status" value="1"/>
</dbReference>
<dbReference type="InterPro" id="IPR049560">
    <property type="entry name" value="MeTrfase_RsmB-F_NOP2_cat"/>
</dbReference>
<dbReference type="InterPro" id="IPR001678">
    <property type="entry name" value="MeTrfase_RsmB-F_NOP2_dom"/>
</dbReference>
<dbReference type="InterPro" id="IPR035926">
    <property type="entry name" value="NusB-like_sf"/>
</dbReference>
<dbReference type="InterPro" id="IPR006027">
    <property type="entry name" value="NusB_RsmB_TIM44"/>
</dbReference>
<dbReference type="InterPro" id="IPR023267">
    <property type="entry name" value="RCMT"/>
</dbReference>
<dbReference type="InterPro" id="IPR004573">
    <property type="entry name" value="rRNA_ssu_MeTfrase_B"/>
</dbReference>
<dbReference type="InterPro" id="IPR023541">
    <property type="entry name" value="rRNA_ssu_MeTfrase_B_ent"/>
</dbReference>
<dbReference type="InterPro" id="IPR054728">
    <property type="entry name" value="RsmB-like_ferredoxin"/>
</dbReference>
<dbReference type="InterPro" id="IPR048019">
    <property type="entry name" value="RsmB-like_N"/>
</dbReference>
<dbReference type="InterPro" id="IPR018314">
    <property type="entry name" value="RsmB/NOL1/NOP2-like_CS"/>
</dbReference>
<dbReference type="InterPro" id="IPR029063">
    <property type="entry name" value="SAM-dependent_MTases_sf"/>
</dbReference>
<dbReference type="NCBIfam" id="NF008149">
    <property type="entry name" value="PRK10901.1"/>
    <property type="match status" value="1"/>
</dbReference>
<dbReference type="NCBIfam" id="NF011494">
    <property type="entry name" value="PRK14902.1"/>
    <property type="match status" value="1"/>
</dbReference>
<dbReference type="NCBIfam" id="TIGR00563">
    <property type="entry name" value="rsmB"/>
    <property type="match status" value="1"/>
</dbReference>
<dbReference type="PANTHER" id="PTHR22807:SF61">
    <property type="entry name" value="NOL1_NOP2_SUN FAMILY PROTEIN _ ANTITERMINATION NUSB DOMAIN-CONTAINING PROTEIN"/>
    <property type="match status" value="1"/>
</dbReference>
<dbReference type="PANTHER" id="PTHR22807">
    <property type="entry name" value="NOP2 YEAST -RELATED NOL1/NOP2/FMU SUN DOMAIN-CONTAINING"/>
    <property type="match status" value="1"/>
</dbReference>
<dbReference type="Pfam" id="PF01189">
    <property type="entry name" value="Methyltr_RsmB-F"/>
    <property type="match status" value="1"/>
</dbReference>
<dbReference type="Pfam" id="PF01029">
    <property type="entry name" value="NusB"/>
    <property type="match status" value="1"/>
</dbReference>
<dbReference type="Pfam" id="PF22458">
    <property type="entry name" value="RsmF-B_ferredox"/>
    <property type="match status" value="1"/>
</dbReference>
<dbReference type="PRINTS" id="PR02008">
    <property type="entry name" value="RCMTFAMILY"/>
</dbReference>
<dbReference type="SUPFAM" id="SSF48013">
    <property type="entry name" value="NusB-like"/>
    <property type="match status" value="1"/>
</dbReference>
<dbReference type="SUPFAM" id="SSF53335">
    <property type="entry name" value="S-adenosyl-L-methionine-dependent methyltransferases"/>
    <property type="match status" value="1"/>
</dbReference>
<dbReference type="PROSITE" id="PS01153">
    <property type="entry name" value="NOL1_NOP2_SUN"/>
    <property type="match status" value="1"/>
</dbReference>
<dbReference type="PROSITE" id="PS51686">
    <property type="entry name" value="SAM_MT_RSMB_NOP"/>
    <property type="match status" value="1"/>
</dbReference>
<proteinExistence type="evidence at protein level"/>
<accession>P36929</accession>
<accession>P23866</accession>
<accession>Q2M6V3</accession>
<name>RSMB_ECOLI</name>
<keyword id="KW-0002">3D-structure</keyword>
<keyword id="KW-0963">Cytoplasm</keyword>
<keyword id="KW-0903">Direct protein sequencing</keyword>
<keyword id="KW-0489">Methyltransferase</keyword>
<keyword id="KW-1185">Reference proteome</keyword>
<keyword id="KW-0694">RNA-binding</keyword>
<keyword id="KW-0698">rRNA processing</keyword>
<keyword id="KW-0949">S-adenosyl-L-methionine</keyword>
<keyword id="KW-0808">Transferase</keyword>
<sequence length="429" mass="48348">MKKQRNLRSMAAQAVEQVVEQGQSLSNILPPLQQKVSDKDKALLQELCFGVLRTLSQLDWLINKLMARPMTGKQRTVHYLIMVGLYQLLYTRIPPHAALAETVEGAIAIKRPQLKGLINGVLRQFQRQQEELLAEFNASDARYLHPSWLLKRLQKAYPEQWQSIVEANNQRPPMWLRINRTHHSRDSWLALLDEAGMKGFPHADYPDAVRLETPAPVHALPGFEDGWVTVQDASAQGCMTWLAPQNGEHILDLCAAPGGKTTHILEVAPEAQVVAVDIDEQRLSRVYDNLKRLGMKATVKQGDGRYPSQWCGEQQFDRILLDAPCSATGVIRRHPDIKWLRRDRDIPELAQLQSEILDAIWPHLKTGGTLVYATCSVLPEENSLQIKAFLQRTADAELCETGTPEQPGKQNLPGAEEGDGFFYAKLIKK</sequence>
<reference key="1">
    <citation type="journal article" date="1993" name="J. Bacteriol.">
        <title>The Escherichia coli fmt gene, encoding methionyl-tRNA(fMet) formyltransferase, escapes metabolic control.</title>
        <authorList>
            <person name="Meinnel T."/>
            <person name="Guillon J.-M."/>
            <person name="Mechulam Y."/>
            <person name="Blanquet S."/>
        </authorList>
    </citation>
    <scope>NUCLEOTIDE SEQUENCE [GENOMIC DNA]</scope>
    <source>
        <strain>K12 / K37</strain>
    </source>
</reference>
<reference key="2">
    <citation type="journal article" date="1997" name="J. Mol. Biol.">
        <title>A survey of polypeptide deformylase function throughout the eubacterial lineage.</title>
        <authorList>
            <person name="Mazel D."/>
            <person name="Coic E."/>
            <person name="Blanchard S."/>
            <person name="Saurin W."/>
            <person name="Marliere P."/>
        </authorList>
    </citation>
    <scope>NUCLEOTIDE SEQUENCE [GENOMIC DNA]</scope>
    <source>
        <strain>K12 / MG1655 / ATCC 47076</strain>
    </source>
</reference>
<reference key="3">
    <citation type="journal article" date="1997" name="Science">
        <title>The complete genome sequence of Escherichia coli K-12.</title>
        <authorList>
            <person name="Blattner F.R."/>
            <person name="Plunkett G. III"/>
            <person name="Bloch C.A."/>
            <person name="Perna N.T."/>
            <person name="Burland V."/>
            <person name="Riley M."/>
            <person name="Collado-Vides J."/>
            <person name="Glasner J.D."/>
            <person name="Rode C.K."/>
            <person name="Mayhew G.F."/>
            <person name="Gregor J."/>
            <person name="Davis N.W."/>
            <person name="Kirkpatrick H.A."/>
            <person name="Goeden M.A."/>
            <person name="Rose D.J."/>
            <person name="Mau B."/>
            <person name="Shao Y."/>
        </authorList>
    </citation>
    <scope>NUCLEOTIDE SEQUENCE [LARGE SCALE GENOMIC DNA]</scope>
    <source>
        <strain>K12 / MG1655 / ATCC 47076</strain>
    </source>
</reference>
<reference key="4">
    <citation type="journal article" date="2006" name="Mol. Syst. Biol.">
        <title>Highly accurate genome sequences of Escherichia coli K-12 strains MG1655 and W3110.</title>
        <authorList>
            <person name="Hayashi K."/>
            <person name="Morooka N."/>
            <person name="Yamamoto Y."/>
            <person name="Fujita K."/>
            <person name="Isono K."/>
            <person name="Choi S."/>
            <person name="Ohtsubo E."/>
            <person name="Baba T."/>
            <person name="Wanner B.L."/>
            <person name="Mori H."/>
            <person name="Horiuchi T."/>
        </authorList>
    </citation>
    <scope>NUCLEOTIDE SEQUENCE [LARGE SCALE GENOMIC DNA]</scope>
    <source>
        <strain>K12 / W3110 / ATCC 27325 / DSM 5911</strain>
    </source>
</reference>
<reference key="5">
    <citation type="journal article" date="1993" name="Mol. Microbiol.">
        <title>NAD+ binding to the Escherichia coli K(+)-uptake protein TrkA and sequence similarity between TrkA and domains of a family of dehydrogenases suggest a role for NAD+ in bacterial transport.</title>
        <authorList>
            <person name="Schloesser A."/>
            <person name="Hamann A."/>
            <person name="Bossemeyer D."/>
            <person name="Schneider E."/>
            <person name="Bakker E.P."/>
        </authorList>
    </citation>
    <scope>NUCLEOTIDE SEQUENCE [GENOMIC DNA] OF 384-429</scope>
</reference>
<reference key="6">
    <citation type="journal article" date="1999" name="Biochemistry">
        <title>Purification, cloning, and characterization of the 16S RNA m5C967 methyltransferase from Escherichia coli.</title>
        <authorList>
            <person name="Tscherne J.S."/>
            <person name="Nurse K."/>
            <person name="Popienick P."/>
            <person name="Michel H."/>
            <person name="Sochacki M."/>
            <person name="Ofengand J."/>
        </authorList>
    </citation>
    <scope>PROTEIN SEQUENCE OF 1-23 AND 418-429</scope>
    <scope>CHARACTERIZATION</scope>
</reference>
<reference key="7">
    <citation type="journal article" date="1999" name="Biochemistry">
        <title>Identification of the 16S rRNA m5C967 methyltransferase from Escherichia coli.</title>
        <authorList>
            <person name="Gu X.R."/>
            <person name="Gustafsson C."/>
            <person name="Ku J."/>
            <person name="Yu M."/>
            <person name="Santi D.V."/>
        </authorList>
    </citation>
    <scope>FUNCTION</scope>
</reference>
<reference key="8">
    <citation type="journal article" date="2000" name="Proc. Natl. Acad. Sci. U.S.A.">
        <title>m5C RNA and m5C DNA methyl transferases use different cysteine residues as catalysts.</title>
        <authorList>
            <person name="Liu Y."/>
            <person name="Santi D.V."/>
        </authorList>
    </citation>
    <scope>MUTAGENESIS OF CYS-325 AND CYS-375</scope>
    <scope>ACTIVE SITE</scope>
</reference>
<reference key="9">
    <citation type="journal article" date="2003" name="Structure">
        <title>The first structure of an RNA m5C methyltransferase, Fmu, provides insight into catalytic mechanism and specific binding of RNA substrate.</title>
        <authorList>
            <person name="Foster P.G."/>
            <person name="Nunes C.R."/>
            <person name="Greene P."/>
            <person name="Moustakas D."/>
            <person name="Stroud R.M."/>
        </authorList>
    </citation>
    <scope>X-RAY CRYSTALLOGRAPHY (2.1 ANGSTROMS) IN COMPLEX WITH S-ADENOSYL-L-METHIONINE</scope>
    <scope>MUTAGENESIS OF CYS-325 AND CYS-375</scope>
</reference>